<sequence length="79" mass="8689">MSGLGIMVLALLLLVFMATSHQDGGGKQATQRDAINVRRRRSITRRVVTETCKEYCEDRDKTCCGLENGQPDCANLCLG</sequence>
<accession>Q9BP61</accession>
<reference key="1">
    <citation type="journal article" date="2001" name="Mol. Biol. Evol.">
        <title>Mechanisms for evolving hypervariability: the case of conopeptides.</title>
        <authorList>
            <person name="Conticello S.G."/>
            <person name="Gilad Y."/>
            <person name="Avidan N."/>
            <person name="Ben-Asher E."/>
            <person name="Levy Z."/>
            <person name="Fainzilber M."/>
        </authorList>
    </citation>
    <scope>NUCLEOTIDE SEQUENCE [MRNA]</scope>
    <source>
        <tissue>Venom duct</tissue>
    </source>
</reference>
<comment type="subcellular location">
    <subcellularLocation>
        <location evidence="1">Secreted</location>
    </subcellularLocation>
</comment>
<comment type="tissue specificity">
    <text>Expressed by the venom duct.</text>
</comment>
<comment type="domain">
    <text evidence="1">The presence of a 'disulfide through disulfide knot' structurally defines this protein as a knottin.</text>
</comment>
<comment type="domain">
    <text>The cysteine framework is VI/VII (C-C-CC-C-C).</text>
</comment>
<comment type="similarity">
    <text evidence="3">Belongs to the conotoxin O3 superfamily.</text>
</comment>
<keyword id="KW-0027">Amidation</keyword>
<keyword id="KW-0165">Cleavage on pair of basic residues</keyword>
<keyword id="KW-1015">Disulfide bond</keyword>
<keyword id="KW-0960">Knottin</keyword>
<keyword id="KW-0528">Neurotoxin</keyword>
<keyword id="KW-0964">Secreted</keyword>
<keyword id="KW-0732">Signal</keyword>
<keyword id="KW-0800">Toxin</keyword>
<evidence type="ECO:0000250" key="1"/>
<evidence type="ECO:0000255" key="2"/>
<evidence type="ECO:0000305" key="3"/>
<protein>
    <recommendedName>
        <fullName>Conotoxin VnMSGL-0122</fullName>
    </recommendedName>
</protein>
<feature type="signal peptide" evidence="2">
    <location>
        <begin position="1"/>
        <end position="20"/>
    </location>
</feature>
<feature type="propeptide" id="PRO_0000404842" evidence="1">
    <location>
        <begin position="21"/>
        <end position="44"/>
    </location>
</feature>
<feature type="peptide" id="PRO_0000404843" description="Conotoxin VnMSGL-0122">
    <location>
        <begin position="47"/>
        <end position="78"/>
    </location>
</feature>
<feature type="modified residue" description="Leucine amide" evidence="1">
    <location>
        <position position="78"/>
    </location>
</feature>
<feature type="disulfide bond" evidence="1">
    <location>
        <begin position="52"/>
        <end position="64"/>
    </location>
</feature>
<feature type="disulfide bond" evidence="1">
    <location>
        <begin position="56"/>
        <end position="73"/>
    </location>
</feature>
<feature type="disulfide bond" evidence="1">
    <location>
        <begin position="63"/>
        <end position="77"/>
    </location>
</feature>
<proteinExistence type="evidence at transcript level"/>
<name>O3620_CONVE</name>
<organism>
    <name type="scientific">Conus ventricosus</name>
    <name type="common">Mediterranean cone</name>
    <dbReference type="NCBI Taxonomy" id="117992"/>
    <lineage>
        <taxon>Eukaryota</taxon>
        <taxon>Metazoa</taxon>
        <taxon>Spiralia</taxon>
        <taxon>Lophotrochozoa</taxon>
        <taxon>Mollusca</taxon>
        <taxon>Gastropoda</taxon>
        <taxon>Caenogastropoda</taxon>
        <taxon>Neogastropoda</taxon>
        <taxon>Conoidea</taxon>
        <taxon>Conidae</taxon>
        <taxon>Conus</taxon>
        <taxon>Lautoconus</taxon>
    </lineage>
</organism>
<dbReference type="EMBL" id="AF215077">
    <property type="protein sequence ID" value="AAG60505.1"/>
    <property type="molecule type" value="mRNA"/>
</dbReference>
<dbReference type="SMR" id="Q9BP61"/>
<dbReference type="ConoServer" id="764">
    <property type="toxin name" value="Vn6.20 precursor"/>
</dbReference>
<dbReference type="GO" id="GO:0005576">
    <property type="term" value="C:extracellular region"/>
    <property type="evidence" value="ECO:0007669"/>
    <property type="project" value="UniProtKB-SubCell"/>
</dbReference>
<dbReference type="GO" id="GO:0008200">
    <property type="term" value="F:ion channel inhibitor activity"/>
    <property type="evidence" value="ECO:0007669"/>
    <property type="project" value="InterPro"/>
</dbReference>
<dbReference type="GO" id="GO:0090729">
    <property type="term" value="F:toxin activity"/>
    <property type="evidence" value="ECO:0007669"/>
    <property type="project" value="UniProtKB-KW"/>
</dbReference>
<dbReference type="InterPro" id="IPR004214">
    <property type="entry name" value="Conotoxin"/>
</dbReference>
<dbReference type="Pfam" id="PF02950">
    <property type="entry name" value="Conotoxin"/>
    <property type="match status" value="1"/>
</dbReference>